<name>PK3CA_MOUSE</name>
<comment type="function">
    <text evidence="9 10 11 12 13 14 15">Phosphoinositide-3-kinase (PI3K) phosphorylates phosphatidylinositol (PI) and its phosphorylated derivatives at position 3 of the inositol ring to produce 3-phosphoinositides. Uses ATP and PtdIns(4,5)P2 (phosphatidylinositol 4,5-bisphosphate) to generate phosphatidylinositol 3,4,5-trisphosphate (PIP3). PIP3 plays a key role by recruiting PH domain-containing proteins to the membrane, including AKT1 and PDPK1, activating signaling cascades involved in cell growth, survival, proliferation, motility and morphology. Participates in cellular signaling in response to various growth factors. Involved in the activation of AKT1 upon stimulation by receptor tyrosine kinases ligands such as EGF, insulin, IGF1, VEGFA and PDGF. Involved in signaling via insulin-receptor substrate (IRS) proteins. Essential in endothelial cell migration during vascular development through VEGFA signaling, possibly by regulating RhoA activity. Required for lymphatic vasculature development, possibly by binding to RAS and by activation by EGF and FGF2, but not by PDGF. Regulates invadopodia formation through the PDPK1-AKT1 pathway. Participates in cardiomyogenesis in embryonic stem cells through a AKT1 pathway. Participates in vasculogenesis in embryonic stem cells through PDK1 and protein kinase C pathway. Also has serine-protein kinase activity: phosphorylates PIK3R1 (p85alpha regulatory subunit), EIF4EBP1 and HRAS. Plays a role in the positive regulation of phagocytosis and pinocytosis (PubMed:19604150).</text>
</comment>
<comment type="catalytic activity">
    <reaction evidence="2">
        <text>a 1,2-diacyl-sn-glycero-3-phospho-(1D-myo-inositol-4,5-bisphosphate) + ATP = a 1,2-diacyl-sn-glycero-3-phospho-(1D-myo-inositol-3,4,5-trisphosphate) + ADP + H(+)</text>
        <dbReference type="Rhea" id="RHEA:21292"/>
        <dbReference type="ChEBI" id="CHEBI:15378"/>
        <dbReference type="ChEBI" id="CHEBI:30616"/>
        <dbReference type="ChEBI" id="CHEBI:57836"/>
        <dbReference type="ChEBI" id="CHEBI:58456"/>
        <dbReference type="ChEBI" id="CHEBI:456216"/>
        <dbReference type="EC" id="2.7.1.153"/>
    </reaction>
    <physiologicalReaction direction="left-to-right" evidence="2">
        <dbReference type="Rhea" id="RHEA:21293"/>
    </physiologicalReaction>
</comment>
<comment type="catalytic activity">
    <reaction evidence="2">
        <text>a 1,2-diacyl-sn-glycero-3-phospho-(1D-myo-inositol) + ATP = a 1,2-diacyl-sn-glycero-3-phospho-(1D-myo-inositol-3-phosphate) + ADP + H(+)</text>
        <dbReference type="Rhea" id="RHEA:12709"/>
        <dbReference type="ChEBI" id="CHEBI:15378"/>
        <dbReference type="ChEBI" id="CHEBI:30616"/>
        <dbReference type="ChEBI" id="CHEBI:57880"/>
        <dbReference type="ChEBI" id="CHEBI:58088"/>
        <dbReference type="ChEBI" id="CHEBI:456216"/>
        <dbReference type="EC" id="2.7.1.137"/>
    </reaction>
    <physiologicalReaction direction="left-to-right" evidence="2">
        <dbReference type="Rhea" id="RHEA:12710"/>
    </physiologicalReaction>
</comment>
<comment type="catalytic activity">
    <reaction evidence="1">
        <text>L-seryl-[protein] + ATP = O-phospho-L-seryl-[protein] + ADP + H(+)</text>
        <dbReference type="Rhea" id="RHEA:17989"/>
        <dbReference type="Rhea" id="RHEA-COMP:9863"/>
        <dbReference type="Rhea" id="RHEA-COMP:11604"/>
        <dbReference type="ChEBI" id="CHEBI:15378"/>
        <dbReference type="ChEBI" id="CHEBI:29999"/>
        <dbReference type="ChEBI" id="CHEBI:30616"/>
        <dbReference type="ChEBI" id="CHEBI:83421"/>
        <dbReference type="ChEBI" id="CHEBI:456216"/>
        <dbReference type="EC" id="2.7.11.1"/>
    </reaction>
    <physiologicalReaction direction="left-to-right" evidence="1">
        <dbReference type="Rhea" id="RHEA:17990"/>
    </physiologicalReaction>
</comment>
<comment type="catalytic activity">
    <reaction evidence="2">
        <text>1,2-dioctanoyl-sn-glycero-3-phospho-(1D-myo-inositol-4,5-bisphosphate) + ATP = 1,2-dioctanoyl-sn-glycero-3-phospho-(1D-myo-inositol-3,4,5-trisphosphate) + ADP + H(+)</text>
        <dbReference type="Rhea" id="RHEA:55632"/>
        <dbReference type="ChEBI" id="CHEBI:15378"/>
        <dbReference type="ChEBI" id="CHEBI:30616"/>
        <dbReference type="ChEBI" id="CHEBI:83416"/>
        <dbReference type="ChEBI" id="CHEBI:83419"/>
        <dbReference type="ChEBI" id="CHEBI:456216"/>
    </reaction>
    <physiologicalReaction direction="left-to-right" evidence="2">
        <dbReference type="Rhea" id="RHEA:55633"/>
    </physiologicalReaction>
</comment>
<comment type="catalytic activity">
    <reaction evidence="2">
        <text>1-octadecanoyl-2-(5Z,8Z,11Z,14Z)-eicosatetraenoyl-sn-glycero-3-phospho-1D-myo-inositol 4,5-bisphosphate + ATP = 1-octadecanoyl-2-(5Z,8Z,11Z,14Z-eicosatetraenoyl)-sn-glycero-3-phospho-(1D-myo-inositol 3,4,5-triphosphate) + ADP + H(+)</text>
        <dbReference type="Rhea" id="RHEA:43396"/>
        <dbReference type="ChEBI" id="CHEBI:15378"/>
        <dbReference type="ChEBI" id="CHEBI:30616"/>
        <dbReference type="ChEBI" id="CHEBI:77137"/>
        <dbReference type="ChEBI" id="CHEBI:83243"/>
        <dbReference type="ChEBI" id="CHEBI:456216"/>
    </reaction>
    <physiologicalReaction direction="left-to-right" evidence="2">
        <dbReference type="Rhea" id="RHEA:43397"/>
    </physiologicalReaction>
</comment>
<comment type="pathway">
    <text evidence="2">Phospholipid metabolism; phosphatidylinositol phosphate biosynthesis.</text>
</comment>
<comment type="subunit">
    <text evidence="2 8 12 16">Heterodimer of a catalytic subunit PIK3CA and a p85 regulatory subunit (PIK3R1, PIK3R2 or PIK3R3) (PubMed:8139567). Interacts with IRS1 in nuclear extracts (PubMed:15197263). Interacts with RUFY3. Interacts with RASD2. Interacts with APPL1 (By similarity). Interacts with HRAS and KRAS (PubMed:17540175). Interaction with HRAS/KRAS is required for PI3K pathway signaling and cell proliferation stimulated by EGF and FGF2 (PubMed:17540175). Interacts with FAM83B; activates the PI3K/AKT signaling cascade (By similarity).</text>
</comment>
<comment type="interaction">
    <interactant intactId="EBI-641748">
        <id>P42337</id>
    </interactant>
    <interactant intactId="EBI-2553183">
        <id>P41241</id>
        <label>Csk</label>
    </interactant>
    <organismsDiffer>false</organismsDiffer>
    <experiments>2</experiments>
</comment>
<comment type="interaction">
    <interactant intactId="EBI-641748">
        <id>P42337</id>
    </interactant>
    <interactant intactId="EBI-641764">
        <id>P26450</id>
        <label>Pik3r1</label>
    </interactant>
    <organismsDiffer>false</organismsDiffer>
    <experiments>7</experiments>
</comment>
<comment type="interaction">
    <interactant intactId="EBI-641748">
        <id>P42337</id>
    </interactant>
    <interactant intactId="EBI-350145">
        <id>P01112</id>
        <label>HRAS</label>
    </interactant>
    <organismsDiffer>true</organismsDiffer>
    <experiments>2</experiments>
</comment>
<comment type="domain">
    <text evidence="2">The PI3K-ABD domain and the PI3K-RBD domain interact with the PI3K/PI4K kinase domain. The C2 PI3K-type domain may facilitate the recruitment to the plasma membrane. The inhibitory interactions with PIK3R1 are mediated by the PI3K-ABD domain and the C2 PI3K-type domain with the iSH2 (inter-SH2) region of PIK3R1, and the C2 PI3K-type domain, the PI3K helical domain, and the PI3K/PI4K kinase domain with the nSH2 (N-terminal SH2) region of PIK3R1.</text>
</comment>
<comment type="disruption phenotype">
    <text evidence="9 11 12 13">Lethal. Embryonic fibroblasts cells are resistant to oncogenic transformation induced by oncogenic receptor tyrosine kinases (RTKs), are unable to differentiate into adipocytes and deficient in cellular signaling in response to various growth factors. Defective responsiveness to insulin led to reduced somatic growth, hyperinsulinemia, glucose intolerance, hyperphagia and increased adiposity.</text>
</comment>
<comment type="similarity">
    <text evidence="4 6 7">Belongs to the PI3/PI4-kinase family.</text>
</comment>
<sequence length="1068" mass="124412">MPPRPSSGELWGIHLMPPRILVECLLPNGMIVTLECLREATLVTIKHELFREARKYPLHQLLQDETSYIFVSVTQEAEREEFFDETRRLCDLRLFQPFLKVIEPVGNREEKILNREIGFVIGMPVCEFDMVKDPEVQDFRRNILNVCKEAVDLRDLNSPHSRAMYVYPPNVESSPELPKHIYNKLDKGQIIVVIWVIVSPNNDKQKYTLKINHDCVPEQVIAEAIRKKTRSMLLSSEQLKLCVLEYQGKYILKVCGCDEYFLEKYPLSQYKYIRSCIMLGRMPNLMLMAKESLYSQLPIDSFTMPSYSRRISTATPYMNGETSTKSLWVINSALRIKILCATYVNVNIRDIDKIYVRTGIYHGGEPLCDNVNTQRVPCSNPRWNEWLNYDIYIPDLPRAARLCLSICSVKGRKGAKEEHCPLAWGNINLFDYTDTLVSGKMALNLWPVPHGLEDLLNPIGVTGSNPNKETPCLELEFDWFSSVVKFPDMSVIEEHANWSVSREAGFSYSHTGLSNRLARDNELRENDKEQLRALCTRDPLSEITEQEKDFLWSHRHYCVTIPEILPKLLLSVKWNSRDEVAQMYCLVKDWPPIKPEQAMELLDCNYPDPMVRSFAVRCLEKYLTDDKLSQYLIQLVQVLKYEQYLDNLLVRFLLKKALTNQRIGHFFFWHLKSEMHNKTVSQRFGLLLESYCRACGMYLKHLNRQVEAMEKLINLTDILKQEKKDETQKVQMKFLVEQMRQPDFMDALQGFLSPLNPAHQLGNLRLEECRIMSSAKRPLWLNWENPDIMSELLFQNNEIIFKNGDDLRQDMLTLQIIRIMENIWQNQGLDLRMLPYGCLSIGDCVGLIEVVRNSHTIMQIQCKGGLKGALQFNSHTLHQWLKDKNKGEIYDAAIDLFTRSCAGYCVATFILGIGDRHNSNIMVKDDGQLFHIDFGHFLDHKKKKFGYKRERVPFVLTQDFLIVISKGAQEYTKTREFERFQEMCYKAYLAIRQHANLFINLFSMMLGSGMPELQSFDDIAYIRKTLALDKTEQEALEYFTKQMNDAHHGGWTTKMDWIFHTIKQHALN</sequence>
<proteinExistence type="evidence at protein level"/>
<evidence type="ECO:0000250" key="1">
    <source>
        <dbReference type="UniProtKB" id="P32871"/>
    </source>
</evidence>
<evidence type="ECO:0000250" key="2">
    <source>
        <dbReference type="UniProtKB" id="P42336"/>
    </source>
</evidence>
<evidence type="ECO:0000255" key="3">
    <source>
        <dbReference type="PROSITE-ProRule" id="PRU00269"/>
    </source>
</evidence>
<evidence type="ECO:0000255" key="4">
    <source>
        <dbReference type="PROSITE-ProRule" id="PRU00877"/>
    </source>
</evidence>
<evidence type="ECO:0000255" key="5">
    <source>
        <dbReference type="PROSITE-ProRule" id="PRU00878"/>
    </source>
</evidence>
<evidence type="ECO:0000255" key="6">
    <source>
        <dbReference type="PROSITE-ProRule" id="PRU00879"/>
    </source>
</evidence>
<evidence type="ECO:0000255" key="7">
    <source>
        <dbReference type="PROSITE-ProRule" id="PRU00880"/>
    </source>
</evidence>
<evidence type="ECO:0000269" key="8">
    <source>
    </source>
</evidence>
<evidence type="ECO:0000269" key="9">
    <source>
    </source>
</evidence>
<evidence type="ECO:0000269" key="10">
    <source>
    </source>
</evidence>
<evidence type="ECO:0000269" key="11">
    <source>
    </source>
</evidence>
<evidence type="ECO:0000269" key="12">
    <source>
    </source>
</evidence>
<evidence type="ECO:0000269" key="13">
    <source>
    </source>
</evidence>
<evidence type="ECO:0000269" key="14">
    <source>
    </source>
</evidence>
<evidence type="ECO:0000269" key="15">
    <source>
    </source>
</evidence>
<evidence type="ECO:0000269" key="16">
    <source>
    </source>
</evidence>
<evidence type="ECO:0000305" key="17"/>
<evidence type="ECO:0007829" key="18">
    <source>
        <dbReference type="PDB" id="4A55"/>
    </source>
</evidence>
<gene>
    <name type="primary">Pik3ca</name>
</gene>
<reference key="1">
    <citation type="journal article" date="1994" name="Mol. Cell. Biol.">
        <title>The interaction of small domains between the subunits of phosphatidylinositol 3-kinase determines enzyme activity.</title>
        <authorList>
            <person name="Klippel A."/>
            <person name="Escobedo J.A."/>
            <person name="Hirano M."/>
            <person name="Williams L.T."/>
        </authorList>
    </citation>
    <scope>NUCLEOTIDE SEQUENCE [MRNA]</scope>
    <scope>SUBUNIT</scope>
    <source>
        <strain>BALB/cJ</strain>
    </source>
</reference>
<reference key="2">
    <citation type="submission" date="2005-07" db="EMBL/GenBank/DDBJ databases">
        <authorList>
            <person name="Mural R.J."/>
            <person name="Adams M.D."/>
            <person name="Myers E.W."/>
            <person name="Smith H.O."/>
            <person name="Venter J.C."/>
        </authorList>
    </citation>
    <scope>NUCLEOTIDE SEQUENCE [LARGE SCALE GENOMIC DNA]</scope>
</reference>
<reference key="3">
    <citation type="journal article" date="2004" name="Genome Res.">
        <title>The status, quality, and expansion of the NIH full-length cDNA project: the Mammalian Gene Collection (MGC).</title>
        <authorList>
            <consortium name="The MGC Project Team"/>
        </authorList>
    </citation>
    <scope>NUCLEOTIDE SEQUENCE [LARGE SCALE MRNA]</scope>
    <source>
        <strain>C57BL/6J</strain>
        <tissue>Eye</tissue>
    </source>
</reference>
<reference key="4">
    <citation type="journal article" date="2004" name="Proc. Natl. Acad. Sci. U.S.A.">
        <title>Control of cell size through phosphorylation of upstream binding factor 1 by nuclear phosphatidylinositol 3-kinase.</title>
        <authorList>
            <person name="Drakas R."/>
            <person name="Tu X."/>
            <person name="Baserga R."/>
        </authorList>
    </citation>
    <scope>INTERACTION WITH IRS1</scope>
</reference>
<reference key="5">
    <citation type="journal article" date="2006" name="Cell">
        <title>A pharmacological map of the PI3-K family defines a role for p110alpha in insulin signaling.</title>
        <authorList>
            <person name="Knight Z.A."/>
            <person name="Gonzalez B."/>
            <person name="Feldman M.E."/>
            <person name="Zunder E.R."/>
            <person name="Goldenberg D.D."/>
            <person name="Williams O."/>
            <person name="Loewith R."/>
            <person name="Stokoe D."/>
            <person name="Balla A."/>
            <person name="Toth B."/>
            <person name="Balla T."/>
            <person name="Weiss W.A."/>
            <person name="Williams R.L."/>
            <person name="Shokat K.M."/>
        </authorList>
    </citation>
    <scope>FUNCTION</scope>
</reference>
<reference key="6">
    <citation type="journal article" date="2006" name="Nature">
        <title>Critical role for the p110alpha phosphoinositide-3-OH kinase in growth and metabolic regulation.</title>
        <authorList>
            <person name="Foukas L.C."/>
            <person name="Claret M."/>
            <person name="Pearce W."/>
            <person name="Okkenhaug K."/>
            <person name="Meek S."/>
            <person name="Peskett E."/>
            <person name="Sancho S."/>
            <person name="Smith A.J.H."/>
            <person name="Withers D.J."/>
            <person name="Vanhaesebroeck B."/>
        </authorList>
    </citation>
    <scope>FUNCTION</scope>
    <scope>DISRUPTION PHENOTYPE</scope>
    <scope>MUTAGENESIS OF ASP-933</scope>
</reference>
<reference key="7">
    <citation type="journal article" date="2006" name="Proc. Natl. Acad. Sci. U.S.A.">
        <title>The p110alpha isoform of PI3K is essential for proper growth factor signaling and oncogenic transformation.</title>
        <authorList>
            <person name="Zhao J.J."/>
            <person name="Cheng H."/>
            <person name="Jia S."/>
            <person name="Wang L."/>
            <person name="Gjoerup O.V."/>
            <person name="Mikami A."/>
            <person name="Roberts T.M."/>
        </authorList>
    </citation>
    <scope>FUNCTION</scope>
    <scope>DISRUPTION PHENOTYPE</scope>
</reference>
<reference key="8">
    <citation type="journal article" date="2007" name="Cell">
        <title>Binding of ras to phosphoinositide 3-kinase p110alpha is required for ras-driven tumorigenesis in mice.</title>
        <authorList>
            <person name="Gupta S."/>
            <person name="Ramjaun A.R."/>
            <person name="Haiko P."/>
            <person name="Wang Y."/>
            <person name="Warne P.H."/>
            <person name="Nicke B."/>
            <person name="Nye E."/>
            <person name="Stamp G."/>
            <person name="Alitalo K."/>
            <person name="Downward J."/>
        </authorList>
    </citation>
    <scope>FUNCTION</scope>
    <scope>DISRUPTION PHENOTYPE</scope>
    <scope>INTERACTION WITH HRAS AND KRAS</scope>
    <scope>MUTAGENESIS OF THR-208 AND LYS-227</scope>
</reference>
<reference key="9">
    <citation type="journal article" date="2008" name="Nature">
        <title>Angiogenesis selectively requires the p110alpha isoform of PI3K to control endothelial cell migration.</title>
        <authorList>
            <person name="Graupera M."/>
            <person name="Guillermet-Guibert J."/>
            <person name="Foukas L.C."/>
            <person name="Phng L.-K."/>
            <person name="Cain R.J."/>
            <person name="Salpekar A."/>
            <person name="Pearce W."/>
            <person name="Meek S."/>
            <person name="Millan J."/>
            <person name="Cutillas P.R."/>
            <person name="Smith A.J.H."/>
            <person name="Ridley A.J."/>
            <person name="Ruhrberg C."/>
            <person name="Gerhardt H."/>
            <person name="Vanhaesebroeck B."/>
        </authorList>
    </citation>
    <scope>FUNCTION</scope>
    <scope>DISRUPTION PHENOTYPE</scope>
</reference>
<reference key="10">
    <citation type="journal article" date="2009" name="Biochem. J.">
        <title>Specific role of phosphoinositide 3-kinase p110alpha in the regulation of phagocytosis and pinocytosis in macrophages.</title>
        <authorList>
            <person name="Tamura N."/>
            <person name="Hazeki K."/>
            <person name="Okazaki N."/>
            <person name="Kametani Y."/>
            <person name="Murakami H."/>
            <person name="Takaba Y."/>
            <person name="Ishikawa Y."/>
            <person name="Nigorikawa K."/>
            <person name="Hazeki O."/>
        </authorList>
    </citation>
    <scope>FUNCTION</scope>
</reference>
<reference key="11">
    <citation type="journal article" date="2010" name="Cell">
        <title>A tissue-specific atlas of mouse protein phosphorylation and expression.</title>
        <authorList>
            <person name="Huttlin E.L."/>
            <person name="Jedrychowski M.P."/>
            <person name="Elias J.E."/>
            <person name="Goswami T."/>
            <person name="Rad R."/>
            <person name="Beausoleil S.A."/>
            <person name="Villen J."/>
            <person name="Haas W."/>
            <person name="Sowa M.E."/>
            <person name="Gygi S.P."/>
        </authorList>
    </citation>
    <scope>IDENTIFICATION BY MASS SPECTROMETRY [LARGE SCALE ANALYSIS]</scope>
    <source>
        <tissue>Brain</tissue>
        <tissue>Lung</tissue>
        <tissue>Spleen</tissue>
    </source>
</reference>
<reference key="12">
    <citation type="journal article" date="2011" name="J. Cell Sci.">
        <title>VEGF-mediated PI3K class IA and PKC signaling in cardiomyogenesis and vasculogenesis of mouse embryonic stem cells.</title>
        <authorList>
            <person name="Bekhite M.M."/>
            <person name="Finkensieper A."/>
            <person name="Binas S."/>
            <person name="Mueller J."/>
            <person name="Wetzker R."/>
            <person name="Figulla H.-R."/>
            <person name="Sauer H."/>
            <person name="Wartenberg M."/>
        </authorList>
    </citation>
    <scope>FUNCTION IN CARDIOMYOGENESIS</scope>
    <scope>FUNCTION IN VASCULOGENESIS</scope>
</reference>
<protein>
    <recommendedName>
        <fullName>Phosphatidylinositol 4,5-bisphosphate 3-kinase catalytic subunit alpha isoform</fullName>
        <shortName>PI3-kinase subunit alpha</shortName>
        <shortName>PI3K-alpha</shortName>
        <shortName>PI3Kalpha</shortName>
        <shortName>PtdIns-3-kinase subunit alpha</shortName>
        <ecNumber evidence="2">2.7.1.137</ecNumber>
        <ecNumber evidence="2">2.7.1.153</ecNumber>
    </recommendedName>
    <alternativeName>
        <fullName>Phosphatidylinositol 4,5-bisphosphate 3-kinase 110 kDa catalytic subunit alpha</fullName>
        <shortName>PtdIns-3-kinase subunit p110-alpha</shortName>
        <shortName>p110alpha</shortName>
    </alternativeName>
    <alternativeName>
        <fullName>Phosphoinositide-3-kinase catalytic alpha polypeptide</fullName>
    </alternativeName>
    <alternativeName>
        <fullName>Serine/threonine protein kinase PIK3CA</fullName>
        <ecNumber evidence="1">2.7.11.1</ecNumber>
    </alternativeName>
</protein>
<dbReference type="EC" id="2.7.1.137" evidence="2"/>
<dbReference type="EC" id="2.7.1.153" evidence="2"/>
<dbReference type="EC" id="2.7.11.1" evidence="1"/>
<dbReference type="EMBL" id="U03279">
    <property type="protein sequence ID" value="AAA18334.1"/>
    <property type="molecule type" value="mRNA"/>
</dbReference>
<dbReference type="EMBL" id="CH466530">
    <property type="protein sequence ID" value="EDL34990.1"/>
    <property type="molecule type" value="Genomic_DNA"/>
</dbReference>
<dbReference type="EMBL" id="BC089038">
    <property type="protein sequence ID" value="AAH89038.1"/>
    <property type="molecule type" value="mRNA"/>
</dbReference>
<dbReference type="EMBL" id="BC130228">
    <property type="protein sequence ID" value="AAI30229.1"/>
    <property type="molecule type" value="mRNA"/>
</dbReference>
<dbReference type="CCDS" id="CCDS38409.1"/>
<dbReference type="RefSeq" id="NP_032865.2">
    <property type="nucleotide sequence ID" value="NM_008839.3"/>
</dbReference>
<dbReference type="RefSeq" id="XP_006535472.1">
    <property type="nucleotide sequence ID" value="XM_006535409.3"/>
</dbReference>
<dbReference type="RefSeq" id="XP_006535473.1">
    <property type="nucleotide sequence ID" value="XM_006535410.3"/>
</dbReference>
<dbReference type="PDB" id="4A55">
    <property type="method" value="X-ray"/>
    <property type="resolution" value="3.50 A"/>
    <property type="chains" value="A=1-1068"/>
</dbReference>
<dbReference type="PDBsum" id="4A55"/>
<dbReference type="SMR" id="P42337"/>
<dbReference type="BioGRID" id="202160">
    <property type="interactions" value="11"/>
</dbReference>
<dbReference type="CORUM" id="P42337"/>
<dbReference type="DIP" id="DIP-32095N"/>
<dbReference type="FunCoup" id="P42337">
    <property type="interactions" value="3054"/>
</dbReference>
<dbReference type="IntAct" id="P42337">
    <property type="interactions" value="10"/>
</dbReference>
<dbReference type="MINT" id="P42337"/>
<dbReference type="STRING" id="10090.ENSMUSP00000029201"/>
<dbReference type="BindingDB" id="P42337"/>
<dbReference type="ChEMBL" id="CHEMBL2499"/>
<dbReference type="GlyGen" id="P42337">
    <property type="glycosylation" value="1 site, 1 N-linked glycan (1 site)"/>
</dbReference>
<dbReference type="iPTMnet" id="P42337"/>
<dbReference type="PhosphoSitePlus" id="P42337"/>
<dbReference type="jPOST" id="P42337"/>
<dbReference type="PaxDb" id="10090-ENSMUSP00000029201"/>
<dbReference type="ProteomicsDB" id="289599"/>
<dbReference type="Pumba" id="P42337"/>
<dbReference type="Antibodypedia" id="1374">
    <property type="antibodies" value="746 antibodies from 43 providers"/>
</dbReference>
<dbReference type="DNASU" id="18706"/>
<dbReference type="Ensembl" id="ENSMUST00000029201.14">
    <property type="protein sequence ID" value="ENSMUSP00000029201.8"/>
    <property type="gene ID" value="ENSMUSG00000027665.14"/>
</dbReference>
<dbReference type="Ensembl" id="ENSMUST00000108243.8">
    <property type="protein sequence ID" value="ENSMUSP00000103878.2"/>
    <property type="gene ID" value="ENSMUSG00000027665.14"/>
</dbReference>
<dbReference type="GeneID" id="18706"/>
<dbReference type="KEGG" id="mmu:18706"/>
<dbReference type="UCSC" id="uc008owd.2">
    <property type="organism name" value="mouse"/>
</dbReference>
<dbReference type="AGR" id="MGI:1206581"/>
<dbReference type="CTD" id="5290"/>
<dbReference type="MGI" id="MGI:1206581">
    <property type="gene designation" value="Pik3ca"/>
</dbReference>
<dbReference type="VEuPathDB" id="HostDB:ENSMUSG00000027665"/>
<dbReference type="eggNOG" id="KOG0904">
    <property type="taxonomic scope" value="Eukaryota"/>
</dbReference>
<dbReference type="GeneTree" id="ENSGT00940000155531"/>
<dbReference type="HOGENOM" id="CLU_002191_1_1_1"/>
<dbReference type="InParanoid" id="P42337"/>
<dbReference type="OMA" id="RWSEWLN"/>
<dbReference type="OrthoDB" id="67688at2759"/>
<dbReference type="PhylomeDB" id="P42337"/>
<dbReference type="TreeFam" id="TF102031"/>
<dbReference type="BRENDA" id="2.7.1.137">
    <property type="organism ID" value="3474"/>
</dbReference>
<dbReference type="BRENDA" id="2.7.1.153">
    <property type="organism ID" value="3474"/>
</dbReference>
<dbReference type="Reactome" id="R-MMU-109704">
    <property type="pathway name" value="PI3K Cascade"/>
</dbReference>
<dbReference type="Reactome" id="R-MMU-112399">
    <property type="pathway name" value="IRS-mediated signalling"/>
</dbReference>
<dbReference type="Reactome" id="R-MMU-114604">
    <property type="pathway name" value="GPVI-mediated activation cascade"/>
</dbReference>
<dbReference type="Reactome" id="R-MMU-1250342">
    <property type="pathway name" value="PI3K events in ERBB4 signaling"/>
</dbReference>
<dbReference type="Reactome" id="R-MMU-1257604">
    <property type="pathway name" value="PIP3 activates AKT signaling"/>
</dbReference>
<dbReference type="Reactome" id="R-MMU-1433557">
    <property type="pathway name" value="Signaling by SCF-KIT"/>
</dbReference>
<dbReference type="Reactome" id="R-MMU-1660499">
    <property type="pathway name" value="Synthesis of PIPs at the plasma membrane"/>
</dbReference>
<dbReference type="Reactome" id="R-MMU-180292">
    <property type="pathway name" value="GAB1 signalosome"/>
</dbReference>
<dbReference type="Reactome" id="R-MMU-186763">
    <property type="pathway name" value="Downstream signal transduction"/>
</dbReference>
<dbReference type="Reactome" id="R-MMU-1963642">
    <property type="pathway name" value="PI3K events in ERBB2 signaling"/>
</dbReference>
<dbReference type="Reactome" id="R-MMU-198203">
    <property type="pathway name" value="PI3K/AKT activation"/>
</dbReference>
<dbReference type="Reactome" id="R-MMU-201556">
    <property type="pathway name" value="Signaling by ALK"/>
</dbReference>
<dbReference type="Reactome" id="R-MMU-202424">
    <property type="pathway name" value="Downstream TCR signaling"/>
</dbReference>
<dbReference type="Reactome" id="R-MMU-2029485">
    <property type="pathway name" value="Role of phospholipids in phagocytosis"/>
</dbReference>
<dbReference type="Reactome" id="R-MMU-210993">
    <property type="pathway name" value="Tie2 Signaling"/>
</dbReference>
<dbReference type="Reactome" id="R-MMU-2424491">
    <property type="pathway name" value="DAP12 signaling"/>
</dbReference>
<dbReference type="Reactome" id="R-MMU-2730905">
    <property type="pathway name" value="Role of LAT2/NTAL/LAB on calcium mobilization"/>
</dbReference>
<dbReference type="Reactome" id="R-MMU-389357">
    <property type="pathway name" value="CD28 dependent PI3K/Akt signaling"/>
</dbReference>
<dbReference type="Reactome" id="R-MMU-416476">
    <property type="pathway name" value="G alpha (q) signalling events"/>
</dbReference>
<dbReference type="Reactome" id="R-MMU-4420097">
    <property type="pathway name" value="VEGFA-VEGFR2 Pathway"/>
</dbReference>
<dbReference type="Reactome" id="R-MMU-512988">
    <property type="pathway name" value="Interleukin-3, Interleukin-5 and GM-CSF signaling"/>
</dbReference>
<dbReference type="Reactome" id="R-MMU-5654689">
    <property type="pathway name" value="PI-3K cascade:FGFR1"/>
</dbReference>
<dbReference type="Reactome" id="R-MMU-5654695">
    <property type="pathway name" value="PI-3K cascade:FGFR2"/>
</dbReference>
<dbReference type="Reactome" id="R-MMU-5654710">
    <property type="pathway name" value="PI-3K cascade:FGFR3"/>
</dbReference>
<dbReference type="Reactome" id="R-MMU-5654720">
    <property type="pathway name" value="PI-3K cascade:FGFR4"/>
</dbReference>
<dbReference type="Reactome" id="R-MMU-5673001">
    <property type="pathway name" value="RAF/MAP kinase cascade"/>
</dbReference>
<dbReference type="Reactome" id="R-MMU-6811558">
    <property type="pathway name" value="PI5P, PP2A and IER3 Regulate PI3K/AKT Signaling"/>
</dbReference>
<dbReference type="Reactome" id="R-MMU-8851907">
    <property type="pathway name" value="MET activates PI3K/AKT signaling"/>
</dbReference>
<dbReference type="Reactome" id="R-MMU-8853659">
    <property type="pathway name" value="RET signaling"/>
</dbReference>
<dbReference type="Reactome" id="R-MMU-9009391">
    <property type="pathway name" value="Extra-nuclear estrogen signaling"/>
</dbReference>
<dbReference type="Reactome" id="R-MMU-9013149">
    <property type="pathway name" value="RAC1 GTPase cycle"/>
</dbReference>
<dbReference type="Reactome" id="R-MMU-9013404">
    <property type="pathway name" value="RAC2 GTPase cycle"/>
</dbReference>
<dbReference type="Reactome" id="R-MMU-9027276">
    <property type="pathway name" value="Erythropoietin activates Phosphoinositide-3-kinase (PI3K)"/>
</dbReference>
<dbReference type="Reactome" id="R-MMU-912526">
    <property type="pathway name" value="Interleukin receptor SHC signaling"/>
</dbReference>
<dbReference type="Reactome" id="R-MMU-912631">
    <property type="pathway name" value="Regulation of signaling by CBL"/>
</dbReference>
<dbReference type="Reactome" id="R-MMU-9607240">
    <property type="pathway name" value="FLT3 Signaling"/>
</dbReference>
<dbReference type="Reactome" id="R-MMU-9842663">
    <property type="pathway name" value="Signaling by LTK"/>
</dbReference>
<dbReference type="Reactome" id="R-MMU-9927354">
    <property type="pathway name" value="Co-stimulation by ICOS"/>
</dbReference>
<dbReference type="UniPathway" id="UPA00220"/>
<dbReference type="BioGRID-ORCS" id="18706">
    <property type="hits" value="5 hits in 82 CRISPR screens"/>
</dbReference>
<dbReference type="ChiTaRS" id="Pik3ca">
    <property type="organism name" value="mouse"/>
</dbReference>
<dbReference type="EvolutionaryTrace" id="P42337"/>
<dbReference type="PRO" id="PR:P42337"/>
<dbReference type="Proteomes" id="UP000000589">
    <property type="component" value="Chromosome 3"/>
</dbReference>
<dbReference type="RNAct" id="P42337">
    <property type="molecule type" value="protein"/>
</dbReference>
<dbReference type="Bgee" id="ENSMUSG00000027665">
    <property type="expression patterns" value="Expressed in rostral migratory stream and 257 other cell types or tissues"/>
</dbReference>
<dbReference type="ExpressionAtlas" id="P42337">
    <property type="expression patterns" value="baseline and differential"/>
</dbReference>
<dbReference type="GO" id="GO:0005829">
    <property type="term" value="C:cytosol"/>
    <property type="evidence" value="ECO:0000304"/>
    <property type="project" value="Reactome"/>
</dbReference>
<dbReference type="GO" id="GO:0014704">
    <property type="term" value="C:intercalated disc"/>
    <property type="evidence" value="ECO:0000314"/>
    <property type="project" value="BHF-UCL"/>
</dbReference>
<dbReference type="GO" id="GO:0030027">
    <property type="term" value="C:lamellipodium"/>
    <property type="evidence" value="ECO:0000314"/>
    <property type="project" value="MGI"/>
</dbReference>
<dbReference type="GO" id="GO:0005942">
    <property type="term" value="C:phosphatidylinositol 3-kinase complex"/>
    <property type="evidence" value="ECO:0000353"/>
    <property type="project" value="MGI"/>
</dbReference>
<dbReference type="GO" id="GO:0005943">
    <property type="term" value="C:phosphatidylinositol 3-kinase complex, class IA"/>
    <property type="evidence" value="ECO:0007669"/>
    <property type="project" value="Ensembl"/>
</dbReference>
<dbReference type="GO" id="GO:0016303">
    <property type="term" value="F:1-phosphatidylinositol-3-kinase activity"/>
    <property type="evidence" value="ECO:0000314"/>
    <property type="project" value="MGI"/>
</dbReference>
<dbReference type="GO" id="GO:0046934">
    <property type="term" value="F:1-phosphatidylinositol-4,5-bisphosphate 3-kinase activity"/>
    <property type="evidence" value="ECO:0000304"/>
    <property type="project" value="Reactome"/>
</dbReference>
<dbReference type="GO" id="GO:0005524">
    <property type="term" value="F:ATP binding"/>
    <property type="evidence" value="ECO:0007669"/>
    <property type="project" value="UniProtKB-KW"/>
</dbReference>
<dbReference type="GO" id="GO:0043560">
    <property type="term" value="F:insulin receptor substrate binding"/>
    <property type="evidence" value="ECO:0000353"/>
    <property type="project" value="MGI"/>
</dbReference>
<dbReference type="GO" id="GO:0030295">
    <property type="term" value="F:protein kinase activator activity"/>
    <property type="evidence" value="ECO:0000314"/>
    <property type="project" value="BHF-UCL"/>
</dbReference>
<dbReference type="GO" id="GO:0106310">
    <property type="term" value="F:protein serine kinase activity"/>
    <property type="evidence" value="ECO:0007669"/>
    <property type="project" value="RHEA"/>
</dbReference>
<dbReference type="GO" id="GO:0004674">
    <property type="term" value="F:protein serine/threonine kinase activity"/>
    <property type="evidence" value="ECO:0007669"/>
    <property type="project" value="UniProtKB-KW"/>
</dbReference>
<dbReference type="GO" id="GO:0030036">
    <property type="term" value="P:actin cytoskeleton organization"/>
    <property type="evidence" value="ECO:0000315"/>
    <property type="project" value="BHF-UCL"/>
</dbReference>
<dbReference type="GO" id="GO:0060612">
    <property type="term" value="P:adipose tissue development"/>
    <property type="evidence" value="ECO:0000315"/>
    <property type="project" value="MGI"/>
</dbReference>
<dbReference type="GO" id="GO:0001525">
    <property type="term" value="P:angiogenesis"/>
    <property type="evidence" value="ECO:0007669"/>
    <property type="project" value="UniProtKB-KW"/>
</dbReference>
<dbReference type="GO" id="GO:0141068">
    <property type="term" value="P:autosome genomic imprinting"/>
    <property type="evidence" value="ECO:0000314"/>
    <property type="project" value="BHF-UCL"/>
</dbReference>
<dbReference type="GO" id="GO:0086003">
    <property type="term" value="P:cardiac muscle cell contraction"/>
    <property type="evidence" value="ECO:0000315"/>
    <property type="project" value="BHF-UCL"/>
</dbReference>
<dbReference type="GO" id="GO:0071333">
    <property type="term" value="P:cellular response to glucose stimulus"/>
    <property type="evidence" value="ECO:0000315"/>
    <property type="project" value="MGI"/>
</dbReference>
<dbReference type="GO" id="GO:0071464">
    <property type="term" value="P:cellular response to hydrostatic pressure"/>
    <property type="evidence" value="ECO:0000315"/>
    <property type="project" value="BHF-UCL"/>
</dbReference>
<dbReference type="GO" id="GO:0097009">
    <property type="term" value="P:energy homeostasis"/>
    <property type="evidence" value="ECO:0000315"/>
    <property type="project" value="MGI"/>
</dbReference>
<dbReference type="GO" id="GO:0006006">
    <property type="term" value="P:glucose metabolic process"/>
    <property type="evidence" value="ECO:0000315"/>
    <property type="project" value="MGI"/>
</dbReference>
<dbReference type="GO" id="GO:0008286">
    <property type="term" value="P:insulin receptor signaling pathway"/>
    <property type="evidence" value="ECO:0000315"/>
    <property type="project" value="MGI"/>
</dbReference>
<dbReference type="GO" id="GO:0048009">
    <property type="term" value="P:insulin-like growth factor receptor signaling pathway"/>
    <property type="evidence" value="ECO:0000314"/>
    <property type="project" value="MGI"/>
</dbReference>
<dbReference type="GO" id="GO:0001889">
    <property type="term" value="P:liver development"/>
    <property type="evidence" value="ECO:0000315"/>
    <property type="project" value="MGI"/>
</dbReference>
<dbReference type="GO" id="GO:0030835">
    <property type="term" value="P:negative regulation of actin filament depolymerization"/>
    <property type="evidence" value="ECO:0000315"/>
    <property type="project" value="BHF-UCL"/>
</dbReference>
<dbReference type="GO" id="GO:2000811">
    <property type="term" value="P:negative regulation of anoikis"/>
    <property type="evidence" value="ECO:0007669"/>
    <property type="project" value="Ensembl"/>
</dbReference>
<dbReference type="GO" id="GO:2000270">
    <property type="term" value="P:negative regulation of fibroblast apoptotic process"/>
    <property type="evidence" value="ECO:0000314"/>
    <property type="project" value="MGI"/>
</dbReference>
<dbReference type="GO" id="GO:0010629">
    <property type="term" value="P:negative regulation of gene expression"/>
    <property type="evidence" value="ECO:0007669"/>
    <property type="project" value="Ensembl"/>
</dbReference>
<dbReference type="GO" id="GO:0043524">
    <property type="term" value="P:negative regulation of neuron apoptotic process"/>
    <property type="evidence" value="ECO:0000315"/>
    <property type="project" value="MGI"/>
</dbReference>
<dbReference type="GO" id="GO:0006909">
    <property type="term" value="P:phagocytosis"/>
    <property type="evidence" value="ECO:0007669"/>
    <property type="project" value="UniProtKB-KW"/>
</dbReference>
<dbReference type="GO" id="GO:0043491">
    <property type="term" value="P:phosphatidylinositol 3-kinase/protein kinase B signal transduction"/>
    <property type="evidence" value="ECO:0000314"/>
    <property type="project" value="BHF-UCL"/>
</dbReference>
<dbReference type="GO" id="GO:0051897">
    <property type="term" value="P:positive regulation of phosphatidylinositol 3-kinase/protein kinase B signal transduction"/>
    <property type="evidence" value="ECO:0007669"/>
    <property type="project" value="Ensembl"/>
</dbReference>
<dbReference type="GO" id="GO:1905477">
    <property type="term" value="P:positive regulation of protein localization to membrane"/>
    <property type="evidence" value="ECO:0007669"/>
    <property type="project" value="Ensembl"/>
</dbReference>
<dbReference type="GO" id="GO:0048661">
    <property type="term" value="P:positive regulation of smooth muscle cell proliferation"/>
    <property type="evidence" value="ECO:0007669"/>
    <property type="project" value="Ensembl"/>
</dbReference>
<dbReference type="GO" id="GO:0110053">
    <property type="term" value="P:regulation of actin filament organization"/>
    <property type="evidence" value="ECO:0000315"/>
    <property type="project" value="BHF-UCL"/>
</dbReference>
<dbReference type="GO" id="GO:0043457">
    <property type="term" value="P:regulation of cellular respiration"/>
    <property type="evidence" value="ECO:0000315"/>
    <property type="project" value="MGI"/>
</dbReference>
<dbReference type="GO" id="GO:0010468">
    <property type="term" value="P:regulation of gene expression"/>
    <property type="evidence" value="ECO:0000315"/>
    <property type="project" value="MGI"/>
</dbReference>
<dbReference type="GO" id="GO:0040014">
    <property type="term" value="P:regulation of multicellular organism growth"/>
    <property type="evidence" value="ECO:0000315"/>
    <property type="project" value="MGI"/>
</dbReference>
<dbReference type="GO" id="GO:0055119">
    <property type="term" value="P:relaxation of cardiac muscle"/>
    <property type="evidence" value="ECO:0000315"/>
    <property type="project" value="BHF-UCL"/>
</dbReference>
<dbReference type="GO" id="GO:0014823">
    <property type="term" value="P:response to activity"/>
    <property type="evidence" value="ECO:0007669"/>
    <property type="project" value="Ensembl"/>
</dbReference>
<dbReference type="GO" id="GO:1903544">
    <property type="term" value="P:response to butyrate"/>
    <property type="evidence" value="ECO:0007669"/>
    <property type="project" value="Ensembl"/>
</dbReference>
<dbReference type="GO" id="GO:0071548">
    <property type="term" value="P:response to dexamethasone"/>
    <property type="evidence" value="ECO:0007669"/>
    <property type="project" value="Ensembl"/>
</dbReference>
<dbReference type="GO" id="GO:0043201">
    <property type="term" value="P:response to L-leucine"/>
    <property type="evidence" value="ECO:0007669"/>
    <property type="project" value="Ensembl"/>
</dbReference>
<dbReference type="GO" id="GO:0014870">
    <property type="term" value="P:response to muscle inactivity"/>
    <property type="evidence" value="ECO:0007669"/>
    <property type="project" value="Ensembl"/>
</dbReference>
<dbReference type="GO" id="GO:0035994">
    <property type="term" value="P:response to muscle stretch"/>
    <property type="evidence" value="ECO:0000315"/>
    <property type="project" value="BHF-UCL"/>
</dbReference>
<dbReference type="GO" id="GO:0038203">
    <property type="term" value="P:TORC2 signaling"/>
    <property type="evidence" value="ECO:0000266"/>
    <property type="project" value="MGI"/>
</dbReference>
<dbReference type="GO" id="GO:0038084">
    <property type="term" value="P:vascular endothelial growth factor signaling pathway"/>
    <property type="evidence" value="ECO:0007669"/>
    <property type="project" value="Ensembl"/>
</dbReference>
<dbReference type="CDD" id="cd08398">
    <property type="entry name" value="C2_PI3K_class_I_alpha"/>
    <property type="match status" value="1"/>
</dbReference>
<dbReference type="CDD" id="cd00872">
    <property type="entry name" value="PI3Ka_I"/>
    <property type="match status" value="1"/>
</dbReference>
<dbReference type="CDD" id="cd05175">
    <property type="entry name" value="PI3Kc_IA_alpha"/>
    <property type="match status" value="1"/>
</dbReference>
<dbReference type="DisProt" id="DP02792"/>
<dbReference type="FunFam" id="1.10.1070.11:FF:000006">
    <property type="entry name" value="Phosphatidylinositol 4,5-bisphosphate 3-kinase catalytic subunit"/>
    <property type="match status" value="1"/>
</dbReference>
<dbReference type="FunFam" id="1.25.40.70:FF:000001">
    <property type="entry name" value="Phosphatidylinositol 4,5-bisphosphate 3-kinase catalytic subunit"/>
    <property type="match status" value="1"/>
</dbReference>
<dbReference type="FunFam" id="2.60.40.150:FF:000041">
    <property type="entry name" value="Phosphatidylinositol 4,5-bisphosphate 3-kinase catalytic subunit"/>
    <property type="match status" value="1"/>
</dbReference>
<dbReference type="FunFam" id="3.10.20.90:FF:000055">
    <property type="entry name" value="Phosphatidylinositol 4,5-bisphosphate 3-kinase catalytic subunit"/>
    <property type="match status" value="1"/>
</dbReference>
<dbReference type="FunFam" id="3.10.20.90:FF:000074">
    <property type="entry name" value="Phosphatidylinositol 4,5-bisphosphate 3-kinase catalytic subunit"/>
    <property type="match status" value="1"/>
</dbReference>
<dbReference type="FunFam" id="3.30.1010.10:FF:000007">
    <property type="entry name" value="Phosphatidylinositol 4,5-bisphosphate 3-kinase catalytic subunit"/>
    <property type="match status" value="1"/>
</dbReference>
<dbReference type="Gene3D" id="2.60.40.150">
    <property type="entry name" value="C2 domain"/>
    <property type="match status" value="1"/>
</dbReference>
<dbReference type="Gene3D" id="1.10.1070.11">
    <property type="entry name" value="Phosphatidylinositol 3-/4-kinase, catalytic domain"/>
    <property type="match status" value="1"/>
</dbReference>
<dbReference type="Gene3D" id="3.10.20.90">
    <property type="entry name" value="Phosphatidylinositol 3-kinase Catalytic Subunit, Chain A, domain 1"/>
    <property type="match status" value="2"/>
</dbReference>
<dbReference type="Gene3D" id="3.30.1010.10">
    <property type="entry name" value="Phosphatidylinositol 3-kinase Catalytic Subunit, Chain A, domain 4"/>
    <property type="match status" value="1"/>
</dbReference>
<dbReference type="Gene3D" id="1.25.40.70">
    <property type="entry name" value="Phosphatidylinositol 3-kinase, accessory domain (PIK)"/>
    <property type="match status" value="1"/>
</dbReference>
<dbReference type="InterPro" id="IPR016024">
    <property type="entry name" value="ARM-type_fold"/>
</dbReference>
<dbReference type="InterPro" id="IPR035892">
    <property type="entry name" value="C2_domain_sf"/>
</dbReference>
<dbReference type="InterPro" id="IPR011009">
    <property type="entry name" value="Kinase-like_dom_sf"/>
</dbReference>
<dbReference type="InterPro" id="IPR000403">
    <property type="entry name" value="PI3/4_kinase_cat_dom"/>
</dbReference>
<dbReference type="InterPro" id="IPR036940">
    <property type="entry name" value="PI3/4_kinase_cat_sf"/>
</dbReference>
<dbReference type="InterPro" id="IPR018936">
    <property type="entry name" value="PI3/4_kinase_CS"/>
</dbReference>
<dbReference type="InterPro" id="IPR002420">
    <property type="entry name" value="PI3K-type_C2_dom"/>
</dbReference>
<dbReference type="InterPro" id="IPR003113">
    <property type="entry name" value="PI3K_ABD"/>
</dbReference>
<dbReference type="InterPro" id="IPR001263">
    <property type="entry name" value="PI3K_accessory_dom"/>
</dbReference>
<dbReference type="InterPro" id="IPR042236">
    <property type="entry name" value="PI3K_accessory_sf"/>
</dbReference>
<dbReference type="InterPro" id="IPR000341">
    <property type="entry name" value="PI3K_Ras-bd_dom"/>
</dbReference>
<dbReference type="InterPro" id="IPR037704">
    <property type="entry name" value="PI3Kalpha_dom"/>
</dbReference>
<dbReference type="InterPro" id="IPR015433">
    <property type="entry name" value="PI_Kinase"/>
</dbReference>
<dbReference type="InterPro" id="IPR029071">
    <property type="entry name" value="Ubiquitin-like_domsf"/>
</dbReference>
<dbReference type="PANTHER" id="PTHR10048:SF107">
    <property type="entry name" value="PHOSPHATIDYLINOSITOL 4,5-BISPHOSPHATE 3-KINASE CATALYTIC SUBUNIT ALPHA ISOFORM"/>
    <property type="match status" value="1"/>
</dbReference>
<dbReference type="PANTHER" id="PTHR10048">
    <property type="entry name" value="PHOSPHATIDYLINOSITOL KINASE"/>
    <property type="match status" value="1"/>
</dbReference>
<dbReference type="Pfam" id="PF00454">
    <property type="entry name" value="PI3_PI4_kinase"/>
    <property type="match status" value="1"/>
</dbReference>
<dbReference type="Pfam" id="PF00792">
    <property type="entry name" value="PI3K_C2"/>
    <property type="match status" value="1"/>
</dbReference>
<dbReference type="Pfam" id="PF02192">
    <property type="entry name" value="PI3K_p85B"/>
    <property type="match status" value="1"/>
</dbReference>
<dbReference type="Pfam" id="PF00794">
    <property type="entry name" value="PI3K_rbd"/>
    <property type="match status" value="1"/>
</dbReference>
<dbReference type="Pfam" id="PF00613">
    <property type="entry name" value="PI3Ka"/>
    <property type="match status" value="1"/>
</dbReference>
<dbReference type="SMART" id="SM00142">
    <property type="entry name" value="PI3K_C2"/>
    <property type="match status" value="1"/>
</dbReference>
<dbReference type="SMART" id="SM00143">
    <property type="entry name" value="PI3K_p85B"/>
    <property type="match status" value="1"/>
</dbReference>
<dbReference type="SMART" id="SM00144">
    <property type="entry name" value="PI3K_rbd"/>
    <property type="match status" value="1"/>
</dbReference>
<dbReference type="SMART" id="SM00145">
    <property type="entry name" value="PI3Ka"/>
    <property type="match status" value="1"/>
</dbReference>
<dbReference type="SMART" id="SM00146">
    <property type="entry name" value="PI3Kc"/>
    <property type="match status" value="1"/>
</dbReference>
<dbReference type="SUPFAM" id="SSF48371">
    <property type="entry name" value="ARM repeat"/>
    <property type="match status" value="1"/>
</dbReference>
<dbReference type="SUPFAM" id="SSF49562">
    <property type="entry name" value="C2 domain (Calcium/lipid-binding domain, CaLB)"/>
    <property type="match status" value="1"/>
</dbReference>
<dbReference type="SUPFAM" id="SSF56112">
    <property type="entry name" value="Protein kinase-like (PK-like)"/>
    <property type="match status" value="1"/>
</dbReference>
<dbReference type="SUPFAM" id="SSF54236">
    <property type="entry name" value="Ubiquitin-like"/>
    <property type="match status" value="1"/>
</dbReference>
<dbReference type="PROSITE" id="PS51547">
    <property type="entry name" value="C2_PI3K"/>
    <property type="match status" value="1"/>
</dbReference>
<dbReference type="PROSITE" id="PS00915">
    <property type="entry name" value="PI3_4_KINASE_1"/>
    <property type="match status" value="1"/>
</dbReference>
<dbReference type="PROSITE" id="PS00916">
    <property type="entry name" value="PI3_4_KINASE_2"/>
    <property type="match status" value="1"/>
</dbReference>
<dbReference type="PROSITE" id="PS50290">
    <property type="entry name" value="PI3_4_KINASE_3"/>
    <property type="match status" value="1"/>
</dbReference>
<dbReference type="PROSITE" id="PS51544">
    <property type="entry name" value="PI3K_ABD"/>
    <property type="match status" value="1"/>
</dbReference>
<dbReference type="PROSITE" id="PS51546">
    <property type="entry name" value="PI3K_RBD"/>
    <property type="match status" value="1"/>
</dbReference>
<dbReference type="PROSITE" id="PS51545">
    <property type="entry name" value="PIK_HELICAL"/>
    <property type="match status" value="1"/>
</dbReference>
<feature type="chain" id="PRO_0000088786" description="Phosphatidylinositol 4,5-bisphosphate 3-kinase catalytic subunit alpha isoform">
    <location>
        <begin position="1"/>
        <end position="1068"/>
    </location>
</feature>
<feature type="domain" description="PI3K-ABD" evidence="4">
    <location>
        <begin position="16"/>
        <end position="105"/>
    </location>
</feature>
<feature type="domain" description="PI3K-RBD" evidence="6">
    <location>
        <begin position="187"/>
        <end position="289"/>
    </location>
</feature>
<feature type="domain" description="C2 PI3K-type" evidence="7">
    <location>
        <begin position="330"/>
        <end position="487"/>
    </location>
</feature>
<feature type="domain" description="PIK helical" evidence="5">
    <location>
        <begin position="517"/>
        <end position="694"/>
    </location>
</feature>
<feature type="domain" description="PI3K/PI4K catalytic" evidence="3">
    <location>
        <begin position="765"/>
        <end position="1051"/>
    </location>
</feature>
<feature type="region of interest" description="G-loop" evidence="3">
    <location>
        <begin position="771"/>
        <end position="777"/>
    </location>
</feature>
<feature type="region of interest" description="Catalytic loop" evidence="3">
    <location>
        <begin position="912"/>
        <end position="920"/>
    </location>
</feature>
<feature type="region of interest" description="Activation loop" evidence="3">
    <location>
        <begin position="931"/>
        <end position="957"/>
    </location>
</feature>
<feature type="mutagenesis site" description="Abolishes binding to HRAS and KRAS; does not affect kinase activity; displays defective development of the lymphatic vasculature, resulting in perinatal appearance of chylous ascites and is highly resistant to endogenous Ras oncogene-induced tumorigenesis; when associated with A-227." evidence="12">
    <original>T</original>
    <variation>D</variation>
    <location>
        <position position="208"/>
    </location>
</feature>
<feature type="mutagenesis site" description="Abolishes binding to HRAS and KRAS; does not affect kinase activity; displays defective development of the lymphatic vasculature, resulting in perinatal appearance of chylous ascites and is highly resistant to endogenous Ras oncogene-induced tumorigenesis; when associated with D-208." evidence="12">
    <original>K</original>
    <variation>A</variation>
    <location>
        <position position="227"/>
    </location>
</feature>
<feature type="mutagenesis site" description="Loss of kinase activity; displays early embryonic lethality at 10-11 dpc and severe defects in angiogenic sprouting and vascular remodeling. Heterozygous mice yield adult mice with markedly impaired insulin signaling and reduced activation of effector pathways such as Akt/PKB." evidence="9">
    <original>D</original>
    <variation>A</variation>
    <location>
        <position position="933"/>
    </location>
</feature>
<feature type="sequence conflict" description="In Ref. 1; AAA18334." evidence="17" ref="1">
    <original>A</original>
    <variation>L</variation>
    <location>
        <position position="399"/>
    </location>
</feature>
<feature type="strand" evidence="18">
    <location>
        <begin position="8"/>
        <end position="12"/>
    </location>
</feature>
<feature type="strand" evidence="18">
    <location>
        <begin position="18"/>
        <end position="25"/>
    </location>
</feature>
<feature type="strand" evidence="18">
    <location>
        <begin position="31"/>
        <end position="37"/>
    </location>
</feature>
<feature type="helix" evidence="18">
    <location>
        <begin position="42"/>
        <end position="52"/>
    </location>
</feature>
<feature type="helix" evidence="18">
    <location>
        <begin position="53"/>
        <end position="55"/>
    </location>
</feature>
<feature type="turn" evidence="18">
    <location>
        <begin position="57"/>
        <end position="60"/>
    </location>
</feature>
<feature type="helix" evidence="18">
    <location>
        <begin position="65"/>
        <end position="67"/>
    </location>
</feature>
<feature type="strand" evidence="18">
    <location>
        <begin position="69"/>
        <end position="74"/>
    </location>
</feature>
<feature type="strand" evidence="18">
    <location>
        <begin position="77"/>
        <end position="81"/>
    </location>
</feature>
<feature type="helix" evidence="18">
    <location>
        <begin position="90"/>
        <end position="92"/>
    </location>
</feature>
<feature type="strand" evidence="18">
    <location>
        <begin position="94"/>
        <end position="102"/>
    </location>
</feature>
<feature type="helix" evidence="18">
    <location>
        <begin position="109"/>
        <end position="112"/>
    </location>
</feature>
<feature type="helix" evidence="18">
    <location>
        <begin position="117"/>
        <end position="121"/>
    </location>
</feature>
<feature type="helix" evidence="18">
    <location>
        <begin position="125"/>
        <end position="129"/>
    </location>
</feature>
<feature type="helix" evidence="18">
    <location>
        <begin position="134"/>
        <end position="142"/>
    </location>
</feature>
<feature type="helix" evidence="18">
    <location>
        <begin position="144"/>
        <end position="153"/>
    </location>
</feature>
<feature type="turn" evidence="18">
    <location>
        <begin position="154"/>
        <end position="157"/>
    </location>
</feature>
<feature type="helix" evidence="18">
    <location>
        <begin position="158"/>
        <end position="165"/>
    </location>
</feature>
<feature type="helix" evidence="18">
    <location>
        <begin position="179"/>
        <end position="182"/>
    </location>
</feature>
<feature type="strand" evidence="18">
    <location>
        <begin position="189"/>
        <end position="196"/>
    </location>
</feature>
<feature type="turn" evidence="18">
    <location>
        <begin position="199"/>
        <end position="202"/>
    </location>
</feature>
<feature type="strand" evidence="18">
    <location>
        <begin position="205"/>
        <end position="212"/>
    </location>
</feature>
<feature type="helix" evidence="18">
    <location>
        <begin position="217"/>
        <end position="230"/>
    </location>
</feature>
<feature type="helix" evidence="18">
    <location>
        <begin position="236"/>
        <end position="246"/>
    </location>
</feature>
<feature type="helix" evidence="18">
    <location>
        <begin position="247"/>
        <end position="249"/>
    </location>
</feature>
<feature type="strand" evidence="18">
    <location>
        <begin position="250"/>
        <end position="254"/>
    </location>
</feature>
<feature type="helix" evidence="18">
    <location>
        <begin position="267"/>
        <end position="269"/>
    </location>
</feature>
<feature type="helix" evidence="18">
    <location>
        <begin position="271"/>
        <end position="279"/>
    </location>
</feature>
<feature type="strand" evidence="18">
    <location>
        <begin position="284"/>
        <end position="289"/>
    </location>
</feature>
<feature type="helix" evidence="18">
    <location>
        <begin position="290"/>
        <end position="295"/>
    </location>
</feature>
<feature type="strand" evidence="18">
    <location>
        <begin position="324"/>
        <end position="327"/>
    </location>
</feature>
<feature type="strand" evidence="18">
    <location>
        <begin position="332"/>
        <end position="340"/>
    </location>
</feature>
<feature type="strand" evidence="18">
    <location>
        <begin position="348"/>
        <end position="350"/>
    </location>
</feature>
<feature type="strand" evidence="18">
    <location>
        <begin position="354"/>
        <end position="364"/>
    </location>
</feature>
<feature type="strand" evidence="18">
    <location>
        <begin position="378"/>
        <end position="380"/>
    </location>
</feature>
<feature type="strand" evidence="18">
    <location>
        <begin position="382"/>
        <end position="392"/>
    </location>
</feature>
<feature type="turn" evidence="18">
    <location>
        <begin position="393"/>
        <end position="395"/>
    </location>
</feature>
<feature type="strand" evidence="18">
    <location>
        <begin position="401"/>
        <end position="408"/>
    </location>
</feature>
<feature type="strand" evidence="18">
    <location>
        <begin position="423"/>
        <end position="430"/>
    </location>
</feature>
<feature type="strand" evidence="18">
    <location>
        <begin position="434"/>
        <end position="436"/>
    </location>
</feature>
<feature type="strand" evidence="18">
    <location>
        <begin position="439"/>
        <end position="444"/>
    </location>
</feature>
<feature type="strand" evidence="18">
    <location>
        <begin position="454"/>
        <end position="456"/>
    </location>
</feature>
<feature type="strand" evidence="18">
    <location>
        <begin position="458"/>
        <end position="460"/>
    </location>
</feature>
<feature type="strand" evidence="18">
    <location>
        <begin position="468"/>
        <end position="470"/>
    </location>
</feature>
<feature type="strand" evidence="18">
    <location>
        <begin position="472"/>
        <end position="477"/>
    </location>
</feature>
<feature type="strand" evidence="18">
    <location>
        <begin position="481"/>
        <end position="485"/>
    </location>
</feature>
<feature type="helix" evidence="18">
    <location>
        <begin position="489"/>
        <end position="499"/>
    </location>
</feature>
<feature type="turn" evidence="18">
    <location>
        <begin position="529"/>
        <end position="535"/>
    </location>
</feature>
<feature type="helix" evidence="18">
    <location>
        <begin position="545"/>
        <end position="553"/>
    </location>
</feature>
<feature type="helix" evidence="18">
    <location>
        <begin position="555"/>
        <end position="558"/>
    </location>
</feature>
<feature type="helix" evidence="18">
    <location>
        <begin position="562"/>
        <end position="564"/>
    </location>
</feature>
<feature type="helix" evidence="18">
    <location>
        <begin position="565"/>
        <end position="569"/>
    </location>
</feature>
<feature type="helix" evidence="18">
    <location>
        <begin position="578"/>
        <end position="588"/>
    </location>
</feature>
<feature type="helix" evidence="18">
    <location>
        <begin position="595"/>
        <end position="598"/>
    </location>
</feature>
<feature type="turn" evidence="18">
    <location>
        <begin position="599"/>
        <end position="602"/>
    </location>
</feature>
<feature type="helix" evidence="18">
    <location>
        <begin position="609"/>
        <end position="621"/>
    </location>
</feature>
<feature type="helix" evidence="18">
    <location>
        <begin position="625"/>
        <end position="630"/>
    </location>
</feature>
<feature type="helix" evidence="18">
    <location>
        <begin position="632"/>
        <end position="636"/>
    </location>
</feature>
<feature type="helix" evidence="18">
    <location>
        <begin position="639"/>
        <end position="641"/>
    </location>
</feature>
<feature type="strand" evidence="18">
    <location>
        <begin position="643"/>
        <end position="646"/>
    </location>
</feature>
<feature type="helix" evidence="18">
    <location>
        <begin position="648"/>
        <end position="659"/>
    </location>
</feature>
<feature type="helix" evidence="18">
    <location>
        <begin position="661"/>
        <end position="673"/>
    </location>
</feature>
<feature type="helix" evidence="18">
    <location>
        <begin position="678"/>
        <end position="694"/>
    </location>
</feature>
<feature type="turn" evidence="18">
    <location>
        <begin position="695"/>
        <end position="697"/>
    </location>
</feature>
<feature type="helix" evidence="18">
    <location>
        <begin position="698"/>
        <end position="720"/>
    </location>
</feature>
<feature type="helix" evidence="18">
    <location>
        <begin position="728"/>
        <end position="738"/>
    </location>
</feature>
<feature type="helix" evidence="18">
    <location>
        <begin position="742"/>
        <end position="747"/>
    </location>
</feature>
<feature type="strand" evidence="18">
    <location>
        <begin position="749"/>
        <end position="752"/>
    </location>
</feature>
<feature type="strand" evidence="18">
    <location>
        <begin position="759"/>
        <end position="761"/>
    </location>
</feature>
<feature type="strand" evidence="18">
    <location>
        <begin position="779"/>
        <end position="784"/>
    </location>
</feature>
<feature type="helix" evidence="18">
    <location>
        <begin position="790"/>
        <end position="792"/>
    </location>
</feature>
<feature type="strand" evidence="18">
    <location>
        <begin position="795"/>
        <end position="805"/>
    </location>
</feature>
<feature type="helix" evidence="18">
    <location>
        <begin position="808"/>
        <end position="827"/>
    </location>
</feature>
<feature type="strand" evidence="18">
    <location>
        <begin position="838"/>
        <end position="842"/>
    </location>
</feature>
<feature type="strand" evidence="18">
    <location>
        <begin position="845"/>
        <end position="849"/>
    </location>
</feature>
<feature type="strand" evidence="18">
    <location>
        <begin position="854"/>
        <end position="856"/>
    </location>
</feature>
<feature type="helix" evidence="18">
    <location>
        <begin position="857"/>
        <end position="860"/>
    </location>
</feature>
<feature type="helix" evidence="18">
    <location>
        <begin position="876"/>
        <end position="884"/>
    </location>
</feature>
<feature type="helix" evidence="18">
    <location>
        <begin position="887"/>
        <end position="889"/>
    </location>
</feature>
<feature type="helix" evidence="18">
    <location>
        <begin position="890"/>
        <end position="911"/>
    </location>
</feature>
<feature type="turn" evidence="18">
    <location>
        <begin position="918"/>
        <end position="920"/>
    </location>
</feature>
<feature type="strand" evidence="18">
    <location>
        <begin position="921"/>
        <end position="924"/>
    </location>
</feature>
<feature type="strand" evidence="18">
    <location>
        <begin position="929"/>
        <end position="931"/>
    </location>
</feature>
<feature type="helix" evidence="18">
    <location>
        <begin position="941"/>
        <end position="945"/>
    </location>
</feature>
<feature type="helix" evidence="18">
    <location>
        <begin position="957"/>
        <end position="964"/>
    </location>
</feature>
<feature type="strand" evidence="18">
    <location>
        <begin position="965"/>
        <end position="967"/>
    </location>
</feature>
<feature type="helix" evidence="18">
    <location>
        <begin position="975"/>
        <end position="993"/>
    </location>
</feature>
<feature type="helix" evidence="18">
    <location>
        <begin position="995"/>
        <end position="1004"/>
    </location>
</feature>
<feature type="strand" evidence="18">
    <location>
        <begin position="1013"/>
        <end position="1015"/>
    </location>
</feature>
<feature type="helix" evidence="18">
    <location>
        <begin position="1016"/>
        <end position="1025"/>
    </location>
</feature>
<feature type="helix" evidence="18">
    <location>
        <begin position="1032"/>
        <end position="1043"/>
    </location>
</feature>
<feature type="turn" evidence="18">
    <location>
        <begin position="1046"/>
        <end position="1049"/>
    </location>
</feature>
<feature type="turn" evidence="18">
    <location>
        <begin position="1057"/>
        <end position="1059"/>
    </location>
</feature>
<keyword id="KW-0002">3D-structure</keyword>
<keyword id="KW-0037">Angiogenesis</keyword>
<keyword id="KW-0067">ATP-binding</keyword>
<keyword id="KW-0418">Kinase</keyword>
<keyword id="KW-0547">Nucleotide-binding</keyword>
<keyword id="KW-0581">Phagocytosis</keyword>
<keyword id="KW-0656">Proto-oncogene</keyword>
<keyword id="KW-1185">Reference proteome</keyword>
<keyword id="KW-0723">Serine/threonine-protein kinase</keyword>
<keyword id="KW-0808">Transferase</keyword>
<organism>
    <name type="scientific">Mus musculus</name>
    <name type="common">Mouse</name>
    <dbReference type="NCBI Taxonomy" id="10090"/>
    <lineage>
        <taxon>Eukaryota</taxon>
        <taxon>Metazoa</taxon>
        <taxon>Chordata</taxon>
        <taxon>Craniata</taxon>
        <taxon>Vertebrata</taxon>
        <taxon>Euteleostomi</taxon>
        <taxon>Mammalia</taxon>
        <taxon>Eutheria</taxon>
        <taxon>Euarchontoglires</taxon>
        <taxon>Glires</taxon>
        <taxon>Rodentia</taxon>
        <taxon>Myomorpha</taxon>
        <taxon>Muroidea</taxon>
        <taxon>Muridae</taxon>
        <taxon>Murinae</taxon>
        <taxon>Mus</taxon>
        <taxon>Mus</taxon>
    </lineage>
</organism>
<accession>P42337</accession>
<accession>Q0VGQ5</accession>